<name>AROE_STRSV</name>
<protein>
    <recommendedName>
        <fullName evidence="1">Shikimate dehydrogenase (NADP(+))</fullName>
        <shortName evidence="1">SDH</shortName>
        <ecNumber evidence="1">1.1.1.25</ecNumber>
    </recommendedName>
</protein>
<comment type="function">
    <text evidence="1">Involved in the biosynthesis of the chorismate, which leads to the biosynthesis of aromatic amino acids. Catalyzes the reversible NADPH linked reduction of 3-dehydroshikimate (DHSA) to yield shikimate (SA).</text>
</comment>
<comment type="catalytic activity">
    <reaction evidence="1">
        <text>shikimate + NADP(+) = 3-dehydroshikimate + NADPH + H(+)</text>
        <dbReference type="Rhea" id="RHEA:17737"/>
        <dbReference type="ChEBI" id="CHEBI:15378"/>
        <dbReference type="ChEBI" id="CHEBI:16630"/>
        <dbReference type="ChEBI" id="CHEBI:36208"/>
        <dbReference type="ChEBI" id="CHEBI:57783"/>
        <dbReference type="ChEBI" id="CHEBI:58349"/>
        <dbReference type="EC" id="1.1.1.25"/>
    </reaction>
</comment>
<comment type="pathway">
    <text evidence="1">Metabolic intermediate biosynthesis; chorismate biosynthesis; chorismate from D-erythrose 4-phosphate and phosphoenolpyruvate: step 4/7.</text>
</comment>
<comment type="subunit">
    <text evidence="1">Homodimer.</text>
</comment>
<comment type="similarity">
    <text evidence="1">Belongs to the shikimate dehydrogenase family.</text>
</comment>
<evidence type="ECO:0000255" key="1">
    <source>
        <dbReference type="HAMAP-Rule" id="MF_00222"/>
    </source>
</evidence>
<organism>
    <name type="scientific">Streptococcus sanguinis (strain SK36)</name>
    <dbReference type="NCBI Taxonomy" id="388919"/>
    <lineage>
        <taxon>Bacteria</taxon>
        <taxon>Bacillati</taxon>
        <taxon>Bacillota</taxon>
        <taxon>Bacilli</taxon>
        <taxon>Lactobacillales</taxon>
        <taxon>Streptococcaceae</taxon>
        <taxon>Streptococcus</taxon>
    </lineage>
</organism>
<sequence>MRINGHTRMAAVVAKPIKHSISPLIHNMAFEKTGVNGVYLAWEVEAKDLQASIENIRRYDMFGVNLSMPYKQEVIPYLDELDVSARLIGAVNTVVNKNGILVGYNTDGKGFFKSLPSFAIRGKKMTILGAGGAATAIIAQAALYNAEEIFVFTRQASYEKIVSKMAAISHQTKSRIQVLTLEDADSLQDKINQSDLLVNGTSLGMDGVSMPLPEQLELPSQILVADVIYQPFETPFLKWARNQNVTAVNGLGMLLYQGAEAFELWTGKPMPSQEIWQCLEELYK</sequence>
<accession>A3CNV8</accession>
<dbReference type="EC" id="1.1.1.25" evidence="1"/>
<dbReference type="EMBL" id="CP000387">
    <property type="protein sequence ID" value="ABN44863.1"/>
    <property type="molecule type" value="Genomic_DNA"/>
</dbReference>
<dbReference type="RefSeq" id="WP_002920828.1">
    <property type="nucleotide sequence ID" value="NC_009009.1"/>
</dbReference>
<dbReference type="RefSeq" id="YP_001035413.1">
    <property type="nucleotide sequence ID" value="NC_009009.1"/>
</dbReference>
<dbReference type="SMR" id="A3CNV8"/>
<dbReference type="STRING" id="388919.SSA_1469"/>
<dbReference type="KEGG" id="ssa:SSA_1469"/>
<dbReference type="PATRIC" id="fig|388919.9.peg.1394"/>
<dbReference type="eggNOG" id="COG0169">
    <property type="taxonomic scope" value="Bacteria"/>
</dbReference>
<dbReference type="HOGENOM" id="CLU_044063_4_4_9"/>
<dbReference type="OrthoDB" id="9792692at2"/>
<dbReference type="UniPathway" id="UPA00053">
    <property type="reaction ID" value="UER00087"/>
</dbReference>
<dbReference type="Proteomes" id="UP000002148">
    <property type="component" value="Chromosome"/>
</dbReference>
<dbReference type="GO" id="GO:0050661">
    <property type="term" value="F:NADP binding"/>
    <property type="evidence" value="ECO:0007669"/>
    <property type="project" value="InterPro"/>
</dbReference>
<dbReference type="GO" id="GO:0004764">
    <property type="term" value="F:shikimate 3-dehydrogenase (NADP+) activity"/>
    <property type="evidence" value="ECO:0007669"/>
    <property type="project" value="UniProtKB-UniRule"/>
</dbReference>
<dbReference type="GO" id="GO:0008652">
    <property type="term" value="P:amino acid biosynthetic process"/>
    <property type="evidence" value="ECO:0007669"/>
    <property type="project" value="UniProtKB-KW"/>
</dbReference>
<dbReference type="GO" id="GO:0009073">
    <property type="term" value="P:aromatic amino acid family biosynthetic process"/>
    <property type="evidence" value="ECO:0007669"/>
    <property type="project" value="UniProtKB-KW"/>
</dbReference>
<dbReference type="GO" id="GO:0009423">
    <property type="term" value="P:chorismate biosynthetic process"/>
    <property type="evidence" value="ECO:0007669"/>
    <property type="project" value="UniProtKB-UniRule"/>
</dbReference>
<dbReference type="GO" id="GO:0019632">
    <property type="term" value="P:shikimate metabolic process"/>
    <property type="evidence" value="ECO:0007669"/>
    <property type="project" value="InterPro"/>
</dbReference>
<dbReference type="CDD" id="cd01065">
    <property type="entry name" value="NAD_bind_Shikimate_DH"/>
    <property type="match status" value="1"/>
</dbReference>
<dbReference type="FunFam" id="3.40.50.10860:FF:000004">
    <property type="entry name" value="Quinate/shikimate dehydrogenase"/>
    <property type="match status" value="1"/>
</dbReference>
<dbReference type="Gene3D" id="3.40.50.10860">
    <property type="entry name" value="Leucine Dehydrogenase, chain A, domain 1"/>
    <property type="match status" value="1"/>
</dbReference>
<dbReference type="Gene3D" id="3.40.50.720">
    <property type="entry name" value="NAD(P)-binding Rossmann-like Domain"/>
    <property type="match status" value="1"/>
</dbReference>
<dbReference type="HAMAP" id="MF_00222">
    <property type="entry name" value="Shikimate_DH_AroE"/>
    <property type="match status" value="1"/>
</dbReference>
<dbReference type="InterPro" id="IPR046346">
    <property type="entry name" value="Aminoacid_DH-like_N_sf"/>
</dbReference>
<dbReference type="InterPro" id="IPR036291">
    <property type="entry name" value="NAD(P)-bd_dom_sf"/>
</dbReference>
<dbReference type="InterPro" id="IPR041121">
    <property type="entry name" value="SDH_C"/>
</dbReference>
<dbReference type="InterPro" id="IPR011342">
    <property type="entry name" value="Shikimate_DH"/>
</dbReference>
<dbReference type="InterPro" id="IPR013708">
    <property type="entry name" value="Shikimate_DH-bd_N"/>
</dbReference>
<dbReference type="InterPro" id="IPR022893">
    <property type="entry name" value="Shikimate_DH_fam"/>
</dbReference>
<dbReference type="NCBIfam" id="TIGR00507">
    <property type="entry name" value="aroE"/>
    <property type="match status" value="1"/>
</dbReference>
<dbReference type="NCBIfam" id="NF001315">
    <property type="entry name" value="PRK00258.2-4"/>
    <property type="match status" value="1"/>
</dbReference>
<dbReference type="PANTHER" id="PTHR21089:SF1">
    <property type="entry name" value="BIFUNCTIONAL 3-DEHYDROQUINATE DEHYDRATASE_SHIKIMATE DEHYDROGENASE, CHLOROPLASTIC"/>
    <property type="match status" value="1"/>
</dbReference>
<dbReference type="PANTHER" id="PTHR21089">
    <property type="entry name" value="SHIKIMATE DEHYDROGENASE"/>
    <property type="match status" value="1"/>
</dbReference>
<dbReference type="Pfam" id="PF18317">
    <property type="entry name" value="SDH_C"/>
    <property type="match status" value="1"/>
</dbReference>
<dbReference type="Pfam" id="PF08501">
    <property type="entry name" value="Shikimate_dh_N"/>
    <property type="match status" value="1"/>
</dbReference>
<dbReference type="SUPFAM" id="SSF53223">
    <property type="entry name" value="Aminoacid dehydrogenase-like, N-terminal domain"/>
    <property type="match status" value="1"/>
</dbReference>
<dbReference type="SUPFAM" id="SSF51735">
    <property type="entry name" value="NAD(P)-binding Rossmann-fold domains"/>
    <property type="match status" value="1"/>
</dbReference>
<keyword id="KW-0028">Amino-acid biosynthesis</keyword>
<keyword id="KW-0057">Aromatic amino acid biosynthesis</keyword>
<keyword id="KW-0521">NADP</keyword>
<keyword id="KW-0560">Oxidoreductase</keyword>
<keyword id="KW-1185">Reference proteome</keyword>
<proteinExistence type="inferred from homology"/>
<gene>
    <name evidence="1" type="primary">aroE</name>
    <name type="ordered locus">SSA_1469</name>
</gene>
<reference key="1">
    <citation type="journal article" date="2007" name="J. Bacteriol.">
        <title>Genome of the opportunistic pathogen Streptococcus sanguinis.</title>
        <authorList>
            <person name="Xu P."/>
            <person name="Alves J.M."/>
            <person name="Kitten T."/>
            <person name="Brown A."/>
            <person name="Chen Z."/>
            <person name="Ozaki L.S."/>
            <person name="Manque P."/>
            <person name="Ge X."/>
            <person name="Serrano M.G."/>
            <person name="Puiu D."/>
            <person name="Hendricks S."/>
            <person name="Wang Y."/>
            <person name="Chaplin M.D."/>
            <person name="Akan D."/>
            <person name="Paik S."/>
            <person name="Peterson D.L."/>
            <person name="Macrina F.L."/>
            <person name="Buck G.A."/>
        </authorList>
    </citation>
    <scope>NUCLEOTIDE SEQUENCE [LARGE SCALE GENOMIC DNA]</scope>
    <source>
        <strain>SK36</strain>
    </source>
</reference>
<feature type="chain" id="PRO_1000021352" description="Shikimate dehydrogenase (NADP(+))">
    <location>
        <begin position="1"/>
        <end position="284"/>
    </location>
</feature>
<feature type="active site" description="Proton acceptor" evidence="1">
    <location>
        <position position="71"/>
    </location>
</feature>
<feature type="binding site" evidence="1">
    <location>
        <begin position="20"/>
        <end position="22"/>
    </location>
    <ligand>
        <name>shikimate</name>
        <dbReference type="ChEBI" id="CHEBI:36208"/>
    </ligand>
</feature>
<feature type="binding site" evidence="1">
    <location>
        <position position="67"/>
    </location>
    <ligand>
        <name>shikimate</name>
        <dbReference type="ChEBI" id="CHEBI:36208"/>
    </ligand>
</feature>
<feature type="binding site" evidence="1">
    <location>
        <position position="92"/>
    </location>
    <ligand>
        <name>shikimate</name>
        <dbReference type="ChEBI" id="CHEBI:36208"/>
    </ligand>
</feature>
<feature type="binding site" evidence="1">
    <location>
        <position position="107"/>
    </location>
    <ligand>
        <name>shikimate</name>
        <dbReference type="ChEBI" id="CHEBI:36208"/>
    </ligand>
</feature>
<feature type="binding site" evidence="1">
    <location>
        <begin position="129"/>
        <end position="133"/>
    </location>
    <ligand>
        <name>NADP(+)</name>
        <dbReference type="ChEBI" id="CHEBI:58349"/>
    </ligand>
</feature>
<feature type="binding site" evidence="1">
    <location>
        <position position="227"/>
    </location>
    <ligand>
        <name>NADP(+)</name>
        <dbReference type="ChEBI" id="CHEBI:58349"/>
    </ligand>
</feature>
<feature type="binding site" evidence="1">
    <location>
        <position position="229"/>
    </location>
    <ligand>
        <name>shikimate</name>
        <dbReference type="ChEBI" id="CHEBI:36208"/>
    </ligand>
</feature>
<feature type="binding site" evidence="1">
    <location>
        <position position="250"/>
    </location>
    <ligand>
        <name>NADP(+)</name>
        <dbReference type="ChEBI" id="CHEBI:58349"/>
    </ligand>
</feature>